<dbReference type="EMBL" id="CR380950">
    <property type="protein sequence ID" value="CAG58602.1"/>
    <property type="molecule type" value="Genomic_DNA"/>
</dbReference>
<dbReference type="RefSeq" id="XP_445691.1">
    <property type="nucleotide sequence ID" value="XM_445691.1"/>
</dbReference>
<dbReference type="SMR" id="Q6FVQ3"/>
<dbReference type="FunCoup" id="Q6FVQ3">
    <property type="interactions" value="323"/>
</dbReference>
<dbReference type="STRING" id="284593.Q6FVQ3"/>
<dbReference type="EnsemblFungi" id="CAGL0D06578g-T">
    <property type="protein sequence ID" value="CAGL0D06578g-T-p1"/>
    <property type="gene ID" value="CAGL0D06578g"/>
</dbReference>
<dbReference type="KEGG" id="cgr:2887132"/>
<dbReference type="CGD" id="CAL0128057">
    <property type="gene designation" value="CAGL0D06578g"/>
</dbReference>
<dbReference type="VEuPathDB" id="FungiDB:B1J91_D06578g"/>
<dbReference type="VEuPathDB" id="FungiDB:CAGL0D06578g"/>
<dbReference type="eggNOG" id="KOG3477">
    <property type="taxonomic scope" value="Eukaryota"/>
</dbReference>
<dbReference type="HOGENOM" id="CLU_141947_3_1_1"/>
<dbReference type="InParanoid" id="Q6FVQ3"/>
<dbReference type="OMA" id="GTNDEAC"/>
<dbReference type="Proteomes" id="UP000002428">
    <property type="component" value="Chromosome D"/>
</dbReference>
<dbReference type="GO" id="GO:0005758">
    <property type="term" value="C:mitochondrial intermembrane space"/>
    <property type="evidence" value="ECO:0007669"/>
    <property type="project" value="UniProtKB-SubCell"/>
</dbReference>
<dbReference type="GO" id="GO:0033617">
    <property type="term" value="P:mitochondrial cytochrome c oxidase assembly"/>
    <property type="evidence" value="ECO:0007669"/>
    <property type="project" value="TreeGrafter"/>
</dbReference>
<dbReference type="InterPro" id="IPR051383">
    <property type="entry name" value="COX19"/>
</dbReference>
<dbReference type="PANTHER" id="PTHR21107">
    <property type="entry name" value="CYTOCHROME C OXIDASE ASSEMBLY PROTEIN COX19"/>
    <property type="match status" value="1"/>
</dbReference>
<dbReference type="PANTHER" id="PTHR21107:SF2">
    <property type="entry name" value="CYTOCHROME C OXIDASE ASSEMBLY PROTEIN COX19"/>
    <property type="match status" value="1"/>
</dbReference>
<dbReference type="PROSITE" id="PS51808">
    <property type="entry name" value="CHCH"/>
    <property type="match status" value="1"/>
</dbReference>
<proteinExistence type="inferred from homology"/>
<name>COX19_CANGA</name>
<sequence length="86" mass="9734">MSSGNPGGALRALSPTPPERGSFPLDHDGECAEYMQKYLQCMRLAANENAHNCRLLAKDYLKCRMDHQLMDKDEWKNLGLPPDDKQ</sequence>
<organism>
    <name type="scientific">Candida glabrata (strain ATCC 2001 / BCRC 20586 / JCM 3761 / NBRC 0622 / NRRL Y-65 / CBS 138)</name>
    <name type="common">Yeast</name>
    <name type="synonym">Nakaseomyces glabratus</name>
    <dbReference type="NCBI Taxonomy" id="284593"/>
    <lineage>
        <taxon>Eukaryota</taxon>
        <taxon>Fungi</taxon>
        <taxon>Dikarya</taxon>
        <taxon>Ascomycota</taxon>
        <taxon>Saccharomycotina</taxon>
        <taxon>Saccharomycetes</taxon>
        <taxon>Saccharomycetales</taxon>
        <taxon>Saccharomycetaceae</taxon>
        <taxon>Nakaseomyces</taxon>
    </lineage>
</organism>
<keyword id="KW-0963">Cytoplasm</keyword>
<keyword id="KW-1015">Disulfide bond</keyword>
<keyword id="KW-0496">Mitochondrion</keyword>
<keyword id="KW-1185">Reference proteome</keyword>
<evidence type="ECO:0000250" key="1"/>
<evidence type="ECO:0000255" key="2">
    <source>
        <dbReference type="PROSITE-ProRule" id="PRU01150"/>
    </source>
</evidence>
<evidence type="ECO:0000256" key="3">
    <source>
        <dbReference type="SAM" id="MobiDB-lite"/>
    </source>
</evidence>
<evidence type="ECO:0000305" key="4"/>
<reference key="1">
    <citation type="journal article" date="2004" name="Nature">
        <title>Genome evolution in yeasts.</title>
        <authorList>
            <person name="Dujon B."/>
            <person name="Sherman D."/>
            <person name="Fischer G."/>
            <person name="Durrens P."/>
            <person name="Casaregola S."/>
            <person name="Lafontaine I."/>
            <person name="de Montigny J."/>
            <person name="Marck C."/>
            <person name="Neuveglise C."/>
            <person name="Talla E."/>
            <person name="Goffard N."/>
            <person name="Frangeul L."/>
            <person name="Aigle M."/>
            <person name="Anthouard V."/>
            <person name="Babour A."/>
            <person name="Barbe V."/>
            <person name="Barnay S."/>
            <person name="Blanchin S."/>
            <person name="Beckerich J.-M."/>
            <person name="Beyne E."/>
            <person name="Bleykasten C."/>
            <person name="Boisrame A."/>
            <person name="Boyer J."/>
            <person name="Cattolico L."/>
            <person name="Confanioleri F."/>
            <person name="de Daruvar A."/>
            <person name="Despons L."/>
            <person name="Fabre E."/>
            <person name="Fairhead C."/>
            <person name="Ferry-Dumazet H."/>
            <person name="Groppi A."/>
            <person name="Hantraye F."/>
            <person name="Hennequin C."/>
            <person name="Jauniaux N."/>
            <person name="Joyet P."/>
            <person name="Kachouri R."/>
            <person name="Kerrest A."/>
            <person name="Koszul R."/>
            <person name="Lemaire M."/>
            <person name="Lesur I."/>
            <person name="Ma L."/>
            <person name="Muller H."/>
            <person name="Nicaud J.-M."/>
            <person name="Nikolski M."/>
            <person name="Oztas S."/>
            <person name="Ozier-Kalogeropoulos O."/>
            <person name="Pellenz S."/>
            <person name="Potier S."/>
            <person name="Richard G.-F."/>
            <person name="Straub M.-L."/>
            <person name="Suleau A."/>
            <person name="Swennen D."/>
            <person name="Tekaia F."/>
            <person name="Wesolowski-Louvel M."/>
            <person name="Westhof E."/>
            <person name="Wirth B."/>
            <person name="Zeniou-Meyer M."/>
            <person name="Zivanovic Y."/>
            <person name="Bolotin-Fukuhara M."/>
            <person name="Thierry A."/>
            <person name="Bouchier C."/>
            <person name="Caudron B."/>
            <person name="Scarpelli C."/>
            <person name="Gaillardin C."/>
            <person name="Weissenbach J."/>
            <person name="Wincker P."/>
            <person name="Souciet J.-L."/>
        </authorList>
    </citation>
    <scope>NUCLEOTIDE SEQUENCE [LARGE SCALE GENOMIC DNA]</scope>
    <source>
        <strain>ATCC 2001 / BCRC 20586 / JCM 3761 / NBRC 0622 / NRRL Y-65 / CBS 138</strain>
    </source>
</reference>
<comment type="function">
    <text evidence="1">Required for the assembly of mitochondrial cytochrome c oxidase.</text>
</comment>
<comment type="subcellular location">
    <subcellularLocation>
        <location evidence="1">Cytoplasm</location>
    </subcellularLocation>
    <subcellularLocation>
        <location evidence="1">Mitochondrion intermembrane space</location>
    </subcellularLocation>
</comment>
<comment type="similarity">
    <text evidence="4">Belongs to the COX19 family.</text>
</comment>
<gene>
    <name type="primary">COX19</name>
    <name type="ordered locus">CAGL0D06578g</name>
</gene>
<accession>Q6FVQ3</accession>
<protein>
    <recommendedName>
        <fullName>Cytochrome c oxidase assembly protein COX19</fullName>
    </recommendedName>
</protein>
<feature type="chain" id="PRO_0000122286" description="Cytochrome c oxidase assembly protein COX19">
    <location>
        <begin position="1"/>
        <end position="86"/>
    </location>
</feature>
<feature type="domain" description="CHCH" evidence="2">
    <location>
        <begin position="28"/>
        <end position="71"/>
    </location>
</feature>
<feature type="region of interest" description="Disordered" evidence="3">
    <location>
        <begin position="1"/>
        <end position="25"/>
    </location>
</feature>
<feature type="short sequence motif" description="Cx9C motif 1" evidence="2">
    <location>
        <begin position="31"/>
        <end position="41"/>
    </location>
</feature>
<feature type="short sequence motif" description="Cx9C motif 2" evidence="2">
    <location>
        <begin position="53"/>
        <end position="63"/>
    </location>
</feature>
<feature type="disulfide bond" evidence="2">
    <location>
        <begin position="31"/>
        <end position="63"/>
    </location>
</feature>
<feature type="disulfide bond" evidence="2">
    <location>
        <begin position="41"/>
        <end position="53"/>
    </location>
</feature>